<comment type="similarity">
    <text evidence="1">Belongs to the small heat shock protein (HSP20) family.</text>
</comment>
<feature type="chain" id="PRO_0000126042" description="Small heat shock protein ibp">
    <location>
        <begin position="1"/>
        <end position="153"/>
    </location>
</feature>
<feature type="domain" description="sHSP" evidence="1">
    <location>
        <begin position="35"/>
        <end position="153"/>
    </location>
</feature>
<evidence type="ECO:0000255" key="1">
    <source>
        <dbReference type="PROSITE-ProRule" id="PRU00285"/>
    </source>
</evidence>
<sequence>MSYHSFSLEPKYENTMLSQRFKEIDKLFSTLSGKKIISDSVPPYDILQLKENFYKLIVSVPGYLEKNLEISTQYDQLIIIGKKEITENTNEKKETVEKILHQEIYTGDFSLSFRLNERISVMSATLDQGLLTIYFEYQIPEKQKIQKIQINVK</sequence>
<geneLocation type="plasmid">
    <name>pBTs1</name>
</geneLocation>
<name>IBP_BUCTS</name>
<proteinExistence type="inferred from homology"/>
<reference key="1">
    <citation type="journal article" date="1997" name="J. Bacteriol.">
        <title>Putative evolutionary origin of plasmids carrying the genes involved in leucine biosynthesis in Buchnera aphidicola (endosymbiont of aphids).</title>
        <authorList>
            <person name="van Ham R.C.H.J."/>
            <person name="Moya A."/>
            <person name="Latorre A."/>
        </authorList>
    </citation>
    <scope>NUCLEOTIDE SEQUENCE [GENOMIC DNA]</scope>
</reference>
<dbReference type="EMBL" id="Y11966">
    <property type="protein sequence ID" value="CAA72698.1"/>
    <property type="molecule type" value="Genomic_DNA"/>
</dbReference>
<dbReference type="SMR" id="O31288"/>
<dbReference type="CDD" id="cd06470">
    <property type="entry name" value="ACD_IbpA-B_like"/>
    <property type="match status" value="1"/>
</dbReference>
<dbReference type="Gene3D" id="2.60.40.790">
    <property type="match status" value="1"/>
</dbReference>
<dbReference type="InterPro" id="IPR002068">
    <property type="entry name" value="A-crystallin/Hsp20_dom"/>
</dbReference>
<dbReference type="InterPro" id="IPR037913">
    <property type="entry name" value="ACD_IbpA/B"/>
</dbReference>
<dbReference type="InterPro" id="IPR008978">
    <property type="entry name" value="HSP20-like_chaperone"/>
</dbReference>
<dbReference type="PANTHER" id="PTHR47062">
    <property type="match status" value="1"/>
</dbReference>
<dbReference type="PANTHER" id="PTHR47062:SF1">
    <property type="entry name" value="SMALL HEAT SHOCK PROTEIN IBPA"/>
    <property type="match status" value="1"/>
</dbReference>
<dbReference type="Pfam" id="PF00011">
    <property type="entry name" value="HSP20"/>
    <property type="match status" value="1"/>
</dbReference>
<dbReference type="SUPFAM" id="SSF49764">
    <property type="entry name" value="HSP20-like chaperones"/>
    <property type="match status" value="1"/>
</dbReference>
<dbReference type="PROSITE" id="PS01031">
    <property type="entry name" value="SHSP"/>
    <property type="match status" value="1"/>
</dbReference>
<keyword id="KW-0614">Plasmid</keyword>
<keyword id="KW-0346">Stress response</keyword>
<accession>O31288</accession>
<gene>
    <name type="primary">ibp</name>
    <name type="synonym">hspA</name>
</gene>
<protein>
    <recommendedName>
        <fullName>Small heat shock protein ibp</fullName>
    </recommendedName>
</protein>
<organism>
    <name type="scientific">Buchnera aphidicola subsp. Thelaxes suberi</name>
    <dbReference type="NCBI Taxonomy" id="98797"/>
    <lineage>
        <taxon>Bacteria</taxon>
        <taxon>Pseudomonadati</taxon>
        <taxon>Pseudomonadota</taxon>
        <taxon>Gammaproteobacteria</taxon>
        <taxon>Enterobacterales</taxon>
        <taxon>Erwiniaceae</taxon>
        <taxon>Buchnera</taxon>
    </lineage>
</organism>